<feature type="chain" id="PRO_1000061985" description="N(4)-acetylcytidine amidohydrolase">
    <location>
        <begin position="1"/>
        <end position="102"/>
    </location>
</feature>
<feature type="domain" description="ASCH" evidence="1">
    <location>
        <begin position="6"/>
        <end position="93"/>
    </location>
</feature>
<feature type="active site" description="Proton acceptor" evidence="2">
    <location>
        <position position="20"/>
    </location>
</feature>
<feature type="active site" description="Nucleophile" evidence="2">
    <location>
        <position position="23"/>
    </location>
</feature>
<feature type="active site" description="Proton donor" evidence="2">
    <location>
        <position position="73"/>
    </location>
</feature>
<name>AC4CH_SERP5</name>
<dbReference type="EC" id="3.5.1.135" evidence="2"/>
<dbReference type="EMBL" id="CP000826">
    <property type="protein sequence ID" value="ABV41903.1"/>
    <property type="molecule type" value="Genomic_DNA"/>
</dbReference>
<dbReference type="SMR" id="A8GFL3"/>
<dbReference type="STRING" id="399741.Spro_2802"/>
<dbReference type="KEGG" id="spe:Spro_2802"/>
<dbReference type="eggNOG" id="COG3097">
    <property type="taxonomic scope" value="Bacteria"/>
</dbReference>
<dbReference type="HOGENOM" id="CLU_152586_0_0_6"/>
<dbReference type="OrthoDB" id="8590202at2"/>
<dbReference type="GO" id="GO:0005829">
    <property type="term" value="C:cytosol"/>
    <property type="evidence" value="ECO:0007669"/>
    <property type="project" value="TreeGrafter"/>
</dbReference>
<dbReference type="GO" id="GO:0016813">
    <property type="term" value="F:hydrolase activity, acting on carbon-nitrogen (but not peptide) bonds, in linear amidines"/>
    <property type="evidence" value="ECO:0007669"/>
    <property type="project" value="UniProtKB-UniRule"/>
</dbReference>
<dbReference type="GO" id="GO:0106251">
    <property type="term" value="F:N4-acetylcytidine amidohydrolase activity"/>
    <property type="evidence" value="ECO:0007669"/>
    <property type="project" value="RHEA"/>
</dbReference>
<dbReference type="CDD" id="cd06552">
    <property type="entry name" value="ASCH_yqfb_like"/>
    <property type="match status" value="1"/>
</dbReference>
<dbReference type="FunFam" id="2.30.130.30:FF:000001">
    <property type="entry name" value="UPF0267 protein YqfB"/>
    <property type="match status" value="1"/>
</dbReference>
<dbReference type="Gene3D" id="2.30.130.30">
    <property type="entry name" value="Hypothetical protein"/>
    <property type="match status" value="1"/>
</dbReference>
<dbReference type="HAMAP" id="MF_00684">
    <property type="entry name" value="ac4C_amidohydr"/>
    <property type="match status" value="1"/>
</dbReference>
<dbReference type="InterPro" id="IPR008314">
    <property type="entry name" value="AC4CH"/>
</dbReference>
<dbReference type="InterPro" id="IPR007374">
    <property type="entry name" value="ASCH_domain"/>
</dbReference>
<dbReference type="InterPro" id="IPR015947">
    <property type="entry name" value="PUA-like_sf"/>
</dbReference>
<dbReference type="NCBIfam" id="NF003443">
    <property type="entry name" value="PRK04980.1"/>
    <property type="match status" value="1"/>
</dbReference>
<dbReference type="PANTHER" id="PTHR38088">
    <property type="entry name" value="UCP029143 FAMILY PROTEIN"/>
    <property type="match status" value="1"/>
</dbReference>
<dbReference type="PANTHER" id="PTHR38088:SF2">
    <property type="entry name" value="UCP029143 FAMILY PROTEIN"/>
    <property type="match status" value="1"/>
</dbReference>
<dbReference type="Pfam" id="PF04266">
    <property type="entry name" value="ASCH"/>
    <property type="match status" value="1"/>
</dbReference>
<dbReference type="PIRSF" id="PIRSF029143">
    <property type="entry name" value="UCP029143"/>
    <property type="match status" value="1"/>
</dbReference>
<dbReference type="SMART" id="SM01022">
    <property type="entry name" value="ASCH"/>
    <property type="match status" value="1"/>
</dbReference>
<dbReference type="SUPFAM" id="SSF88697">
    <property type="entry name" value="PUA domain-like"/>
    <property type="match status" value="1"/>
</dbReference>
<proteinExistence type="inferred from homology"/>
<organism>
    <name type="scientific">Serratia proteamaculans (strain 568)</name>
    <dbReference type="NCBI Taxonomy" id="399741"/>
    <lineage>
        <taxon>Bacteria</taxon>
        <taxon>Pseudomonadati</taxon>
        <taxon>Pseudomonadota</taxon>
        <taxon>Gammaproteobacteria</taxon>
        <taxon>Enterobacterales</taxon>
        <taxon>Yersiniaceae</taxon>
        <taxon>Serratia</taxon>
    </lineage>
</organism>
<keyword id="KW-0378">Hydrolase</keyword>
<accession>A8GFL3</accession>
<gene>
    <name type="ordered locus">Spro_2802</name>
</gene>
<sequence length="102" mass="11817">MSREITFFSRFEQDILAGRKTITIRDASESHFQPGEVLRVSRNEDNVFFCQIEVLSVTPVRLDGLTEQHARQENMSLGELKQVIKEIYPGLDELFVITFAKR</sequence>
<protein>
    <recommendedName>
        <fullName evidence="2">N(4)-acetylcytidine amidohydrolase</fullName>
        <shortName evidence="2">ac4C amidohydrolase</shortName>
        <ecNumber evidence="2">3.5.1.135</ecNumber>
    </recommendedName>
</protein>
<comment type="function">
    <text evidence="2">Catalyzes the hydrolysis of N(4)-acetylcytidine (ac4C).</text>
</comment>
<comment type="catalytic activity">
    <reaction evidence="2">
        <text>N(4)-acetylcytidine + H2O = cytidine + acetate + H(+)</text>
        <dbReference type="Rhea" id="RHEA:62932"/>
        <dbReference type="ChEBI" id="CHEBI:15377"/>
        <dbReference type="ChEBI" id="CHEBI:15378"/>
        <dbReference type="ChEBI" id="CHEBI:17562"/>
        <dbReference type="ChEBI" id="CHEBI:30089"/>
        <dbReference type="ChEBI" id="CHEBI:70989"/>
        <dbReference type="EC" id="3.5.1.135"/>
    </reaction>
</comment>
<comment type="catalytic activity">
    <reaction evidence="2">
        <text>N(4)-acetyl-2'-deoxycytidine + H2O = 2'-deoxycytidine + acetate + H(+)</text>
        <dbReference type="Rhea" id="RHEA:62936"/>
        <dbReference type="ChEBI" id="CHEBI:15377"/>
        <dbReference type="ChEBI" id="CHEBI:15378"/>
        <dbReference type="ChEBI" id="CHEBI:15698"/>
        <dbReference type="ChEBI" id="CHEBI:30089"/>
        <dbReference type="ChEBI" id="CHEBI:146133"/>
        <dbReference type="EC" id="3.5.1.135"/>
    </reaction>
</comment>
<comment type="catalytic activity">
    <reaction evidence="2">
        <text>N(4)-acetylcytosine + H2O = cytosine + acetate + H(+)</text>
        <dbReference type="Rhea" id="RHEA:62940"/>
        <dbReference type="ChEBI" id="CHEBI:15377"/>
        <dbReference type="ChEBI" id="CHEBI:15378"/>
        <dbReference type="ChEBI" id="CHEBI:16040"/>
        <dbReference type="ChEBI" id="CHEBI:30089"/>
        <dbReference type="ChEBI" id="CHEBI:146134"/>
        <dbReference type="EC" id="3.5.1.135"/>
    </reaction>
</comment>
<comment type="similarity">
    <text evidence="2">Belongs to the N(4)-acetylcytidine amidohydrolase family.</text>
</comment>
<evidence type="ECO:0000255" key="1"/>
<evidence type="ECO:0000255" key="2">
    <source>
        <dbReference type="HAMAP-Rule" id="MF_00684"/>
    </source>
</evidence>
<reference key="1">
    <citation type="submission" date="2007-09" db="EMBL/GenBank/DDBJ databases">
        <title>Complete sequence of chromosome of Serratia proteamaculans 568.</title>
        <authorList>
            <consortium name="US DOE Joint Genome Institute"/>
            <person name="Copeland A."/>
            <person name="Lucas S."/>
            <person name="Lapidus A."/>
            <person name="Barry K."/>
            <person name="Glavina del Rio T."/>
            <person name="Dalin E."/>
            <person name="Tice H."/>
            <person name="Pitluck S."/>
            <person name="Chain P."/>
            <person name="Malfatti S."/>
            <person name="Shin M."/>
            <person name="Vergez L."/>
            <person name="Schmutz J."/>
            <person name="Larimer F."/>
            <person name="Land M."/>
            <person name="Hauser L."/>
            <person name="Kyrpides N."/>
            <person name="Kim E."/>
            <person name="Taghavi S."/>
            <person name="Newman L."/>
            <person name="Vangronsveld J."/>
            <person name="van der Lelie D."/>
            <person name="Richardson P."/>
        </authorList>
    </citation>
    <scope>NUCLEOTIDE SEQUENCE [LARGE SCALE GENOMIC DNA]</scope>
    <source>
        <strain>568</strain>
    </source>
</reference>